<proteinExistence type="inferred from homology"/>
<organism>
    <name type="scientific">Klebsiella pneumoniae subsp. pneumoniae (strain ATCC 700721 / MGH 78578)</name>
    <dbReference type="NCBI Taxonomy" id="272620"/>
    <lineage>
        <taxon>Bacteria</taxon>
        <taxon>Pseudomonadati</taxon>
        <taxon>Pseudomonadota</taxon>
        <taxon>Gammaproteobacteria</taxon>
        <taxon>Enterobacterales</taxon>
        <taxon>Enterobacteriaceae</taxon>
        <taxon>Klebsiella/Raoultella group</taxon>
        <taxon>Klebsiella</taxon>
        <taxon>Klebsiella pneumoniae complex</taxon>
    </lineage>
</organism>
<protein>
    <recommendedName>
        <fullName evidence="1">Phosphopantetheine adenylyltransferase</fullName>
        <ecNumber evidence="1">2.7.7.3</ecNumber>
    </recommendedName>
    <alternativeName>
        <fullName evidence="1">Dephospho-CoA pyrophosphorylase</fullName>
    </alternativeName>
    <alternativeName>
        <fullName evidence="1">Pantetheine-phosphate adenylyltransferase</fullName>
        <shortName evidence="1">PPAT</shortName>
    </alternativeName>
</protein>
<reference key="1">
    <citation type="submission" date="2006-09" db="EMBL/GenBank/DDBJ databases">
        <authorList>
            <consortium name="The Klebsiella pneumonia Genome Sequencing Project"/>
            <person name="McClelland M."/>
            <person name="Sanderson E.K."/>
            <person name="Spieth J."/>
            <person name="Clifton W.S."/>
            <person name="Latreille P."/>
            <person name="Sabo A."/>
            <person name="Pepin K."/>
            <person name="Bhonagiri V."/>
            <person name="Porwollik S."/>
            <person name="Ali J."/>
            <person name="Wilson R.K."/>
        </authorList>
    </citation>
    <scope>NUCLEOTIDE SEQUENCE [LARGE SCALE GENOMIC DNA]</scope>
    <source>
        <strain>ATCC 700721 / MGH 78578</strain>
    </source>
</reference>
<sequence length="159" mass="17663">MSTKAIYPGTFDPITNGHIDIVTRAASMFDKVVLAIAASPSKKPMFSLDERIALAEQATAHLVNVEVIGFSDLMANFARAQQANILIRGLRAVADFEYEMQLAHMNRHLMPTLESVFLMPCKEWSFISSSLVKEVARHQGDVSHFLPANVHQALLNKLK</sequence>
<comment type="function">
    <text evidence="1">Reversibly transfers an adenylyl group from ATP to 4'-phosphopantetheine, yielding dephospho-CoA (dPCoA) and pyrophosphate.</text>
</comment>
<comment type="catalytic activity">
    <reaction evidence="1">
        <text>(R)-4'-phosphopantetheine + ATP + H(+) = 3'-dephospho-CoA + diphosphate</text>
        <dbReference type="Rhea" id="RHEA:19801"/>
        <dbReference type="ChEBI" id="CHEBI:15378"/>
        <dbReference type="ChEBI" id="CHEBI:30616"/>
        <dbReference type="ChEBI" id="CHEBI:33019"/>
        <dbReference type="ChEBI" id="CHEBI:57328"/>
        <dbReference type="ChEBI" id="CHEBI:61723"/>
        <dbReference type="EC" id="2.7.7.3"/>
    </reaction>
</comment>
<comment type="cofactor">
    <cofactor evidence="1">
        <name>Mg(2+)</name>
        <dbReference type="ChEBI" id="CHEBI:18420"/>
    </cofactor>
</comment>
<comment type="pathway">
    <text evidence="1">Cofactor biosynthesis; coenzyme A biosynthesis; CoA from (R)-pantothenate: step 4/5.</text>
</comment>
<comment type="subunit">
    <text evidence="1">Homohexamer.</text>
</comment>
<comment type="subcellular location">
    <subcellularLocation>
        <location evidence="1">Cytoplasm</location>
    </subcellularLocation>
</comment>
<comment type="similarity">
    <text evidence="1">Belongs to the bacterial CoaD family.</text>
</comment>
<evidence type="ECO:0000255" key="1">
    <source>
        <dbReference type="HAMAP-Rule" id="MF_00151"/>
    </source>
</evidence>
<name>COAD_KLEP7</name>
<feature type="chain" id="PRO_1000011161" description="Phosphopantetheine adenylyltransferase">
    <location>
        <begin position="1"/>
        <end position="159"/>
    </location>
</feature>
<feature type="binding site" evidence="1">
    <location>
        <begin position="10"/>
        <end position="11"/>
    </location>
    <ligand>
        <name>ATP</name>
        <dbReference type="ChEBI" id="CHEBI:30616"/>
    </ligand>
</feature>
<feature type="binding site" evidence="1">
    <location>
        <position position="10"/>
    </location>
    <ligand>
        <name>substrate</name>
    </ligand>
</feature>
<feature type="binding site" evidence="1">
    <location>
        <position position="18"/>
    </location>
    <ligand>
        <name>ATP</name>
        <dbReference type="ChEBI" id="CHEBI:30616"/>
    </ligand>
</feature>
<feature type="binding site" evidence="1">
    <location>
        <position position="42"/>
    </location>
    <ligand>
        <name>substrate</name>
    </ligand>
</feature>
<feature type="binding site" evidence="1">
    <location>
        <position position="74"/>
    </location>
    <ligand>
        <name>substrate</name>
    </ligand>
</feature>
<feature type="binding site" evidence="1">
    <location>
        <position position="88"/>
    </location>
    <ligand>
        <name>substrate</name>
    </ligand>
</feature>
<feature type="binding site" evidence="1">
    <location>
        <begin position="89"/>
        <end position="91"/>
    </location>
    <ligand>
        <name>ATP</name>
        <dbReference type="ChEBI" id="CHEBI:30616"/>
    </ligand>
</feature>
<feature type="binding site" evidence="1">
    <location>
        <position position="99"/>
    </location>
    <ligand>
        <name>ATP</name>
        <dbReference type="ChEBI" id="CHEBI:30616"/>
    </ligand>
</feature>
<feature type="binding site" evidence="1">
    <location>
        <begin position="124"/>
        <end position="130"/>
    </location>
    <ligand>
        <name>ATP</name>
        <dbReference type="ChEBI" id="CHEBI:30616"/>
    </ligand>
</feature>
<feature type="site" description="Transition state stabilizer" evidence="1">
    <location>
        <position position="18"/>
    </location>
</feature>
<accession>A6TFM5</accession>
<keyword id="KW-0067">ATP-binding</keyword>
<keyword id="KW-0173">Coenzyme A biosynthesis</keyword>
<keyword id="KW-0963">Cytoplasm</keyword>
<keyword id="KW-0460">Magnesium</keyword>
<keyword id="KW-0547">Nucleotide-binding</keyword>
<keyword id="KW-0548">Nucleotidyltransferase</keyword>
<keyword id="KW-0808">Transferase</keyword>
<gene>
    <name evidence="1" type="primary">coaD</name>
    <name type="ordered locus">KPN78578_39350</name>
    <name type="ORF">KPN_03974</name>
</gene>
<dbReference type="EC" id="2.7.7.3" evidence="1"/>
<dbReference type="EMBL" id="CP000647">
    <property type="protein sequence ID" value="ABR79359.1"/>
    <property type="molecule type" value="Genomic_DNA"/>
</dbReference>
<dbReference type="RefSeq" id="WP_002922501.1">
    <property type="nucleotide sequence ID" value="NC_009648.1"/>
</dbReference>
<dbReference type="SMR" id="A6TFM5"/>
<dbReference type="STRING" id="272620.KPN_03974"/>
<dbReference type="PaxDb" id="272620-KPN_03974"/>
<dbReference type="EnsemblBacteria" id="ABR79359">
    <property type="protein sequence ID" value="ABR79359"/>
    <property type="gene ID" value="KPN_03974"/>
</dbReference>
<dbReference type="KEGG" id="kpn:KPN_03974"/>
<dbReference type="HOGENOM" id="CLU_100149_0_1_6"/>
<dbReference type="UniPathway" id="UPA00241">
    <property type="reaction ID" value="UER00355"/>
</dbReference>
<dbReference type="Proteomes" id="UP000000265">
    <property type="component" value="Chromosome"/>
</dbReference>
<dbReference type="GO" id="GO:0005737">
    <property type="term" value="C:cytoplasm"/>
    <property type="evidence" value="ECO:0007669"/>
    <property type="project" value="UniProtKB-SubCell"/>
</dbReference>
<dbReference type="GO" id="GO:0005524">
    <property type="term" value="F:ATP binding"/>
    <property type="evidence" value="ECO:0007669"/>
    <property type="project" value="UniProtKB-KW"/>
</dbReference>
<dbReference type="GO" id="GO:0004595">
    <property type="term" value="F:pantetheine-phosphate adenylyltransferase activity"/>
    <property type="evidence" value="ECO:0007669"/>
    <property type="project" value="UniProtKB-UniRule"/>
</dbReference>
<dbReference type="GO" id="GO:0015937">
    <property type="term" value="P:coenzyme A biosynthetic process"/>
    <property type="evidence" value="ECO:0007669"/>
    <property type="project" value="UniProtKB-UniRule"/>
</dbReference>
<dbReference type="CDD" id="cd02163">
    <property type="entry name" value="PPAT"/>
    <property type="match status" value="1"/>
</dbReference>
<dbReference type="FunFam" id="3.40.50.620:FF:000012">
    <property type="entry name" value="Phosphopantetheine adenylyltransferase"/>
    <property type="match status" value="1"/>
</dbReference>
<dbReference type="Gene3D" id="3.40.50.620">
    <property type="entry name" value="HUPs"/>
    <property type="match status" value="1"/>
</dbReference>
<dbReference type="HAMAP" id="MF_00151">
    <property type="entry name" value="PPAT_bact"/>
    <property type="match status" value="1"/>
</dbReference>
<dbReference type="InterPro" id="IPR004821">
    <property type="entry name" value="Cyt_trans-like"/>
</dbReference>
<dbReference type="InterPro" id="IPR001980">
    <property type="entry name" value="PPAT"/>
</dbReference>
<dbReference type="InterPro" id="IPR014729">
    <property type="entry name" value="Rossmann-like_a/b/a_fold"/>
</dbReference>
<dbReference type="NCBIfam" id="TIGR01510">
    <property type="entry name" value="coaD_prev_kdtB"/>
    <property type="match status" value="1"/>
</dbReference>
<dbReference type="NCBIfam" id="TIGR00125">
    <property type="entry name" value="cyt_tran_rel"/>
    <property type="match status" value="1"/>
</dbReference>
<dbReference type="PANTHER" id="PTHR21342">
    <property type="entry name" value="PHOSPHOPANTETHEINE ADENYLYLTRANSFERASE"/>
    <property type="match status" value="1"/>
</dbReference>
<dbReference type="PANTHER" id="PTHR21342:SF1">
    <property type="entry name" value="PHOSPHOPANTETHEINE ADENYLYLTRANSFERASE"/>
    <property type="match status" value="1"/>
</dbReference>
<dbReference type="Pfam" id="PF01467">
    <property type="entry name" value="CTP_transf_like"/>
    <property type="match status" value="1"/>
</dbReference>
<dbReference type="PRINTS" id="PR01020">
    <property type="entry name" value="LPSBIOSNTHSS"/>
</dbReference>
<dbReference type="SUPFAM" id="SSF52374">
    <property type="entry name" value="Nucleotidylyl transferase"/>
    <property type="match status" value="1"/>
</dbReference>